<dbReference type="EC" id="6.3.4.2" evidence="1"/>
<dbReference type="EMBL" id="CU928158">
    <property type="protein sequence ID" value="CAQ87852.1"/>
    <property type="molecule type" value="Genomic_DNA"/>
</dbReference>
<dbReference type="RefSeq" id="WP_000210878.1">
    <property type="nucleotide sequence ID" value="NC_011740.1"/>
</dbReference>
<dbReference type="SMR" id="B7LWP4"/>
<dbReference type="MEROPS" id="C26.964"/>
<dbReference type="GeneID" id="93779218"/>
<dbReference type="KEGG" id="efe:EFER_0284"/>
<dbReference type="HOGENOM" id="CLU_011675_5_0_6"/>
<dbReference type="OrthoDB" id="9801107at2"/>
<dbReference type="UniPathway" id="UPA00159">
    <property type="reaction ID" value="UER00277"/>
</dbReference>
<dbReference type="Proteomes" id="UP000000745">
    <property type="component" value="Chromosome"/>
</dbReference>
<dbReference type="GO" id="GO:0005829">
    <property type="term" value="C:cytosol"/>
    <property type="evidence" value="ECO:0007669"/>
    <property type="project" value="TreeGrafter"/>
</dbReference>
<dbReference type="GO" id="GO:0005524">
    <property type="term" value="F:ATP binding"/>
    <property type="evidence" value="ECO:0007669"/>
    <property type="project" value="UniProtKB-KW"/>
</dbReference>
<dbReference type="GO" id="GO:0003883">
    <property type="term" value="F:CTP synthase activity"/>
    <property type="evidence" value="ECO:0007669"/>
    <property type="project" value="UniProtKB-UniRule"/>
</dbReference>
<dbReference type="GO" id="GO:0004359">
    <property type="term" value="F:glutaminase activity"/>
    <property type="evidence" value="ECO:0007669"/>
    <property type="project" value="RHEA"/>
</dbReference>
<dbReference type="GO" id="GO:0042802">
    <property type="term" value="F:identical protein binding"/>
    <property type="evidence" value="ECO:0007669"/>
    <property type="project" value="TreeGrafter"/>
</dbReference>
<dbReference type="GO" id="GO:0046872">
    <property type="term" value="F:metal ion binding"/>
    <property type="evidence" value="ECO:0007669"/>
    <property type="project" value="UniProtKB-KW"/>
</dbReference>
<dbReference type="GO" id="GO:0044210">
    <property type="term" value="P:'de novo' CTP biosynthetic process"/>
    <property type="evidence" value="ECO:0007669"/>
    <property type="project" value="UniProtKB-UniRule"/>
</dbReference>
<dbReference type="GO" id="GO:0019856">
    <property type="term" value="P:pyrimidine nucleobase biosynthetic process"/>
    <property type="evidence" value="ECO:0007669"/>
    <property type="project" value="TreeGrafter"/>
</dbReference>
<dbReference type="CDD" id="cd03113">
    <property type="entry name" value="CTPS_N"/>
    <property type="match status" value="1"/>
</dbReference>
<dbReference type="CDD" id="cd01746">
    <property type="entry name" value="GATase1_CTP_Synthase"/>
    <property type="match status" value="1"/>
</dbReference>
<dbReference type="FunFam" id="3.40.50.300:FF:000009">
    <property type="entry name" value="CTP synthase"/>
    <property type="match status" value="1"/>
</dbReference>
<dbReference type="FunFam" id="3.40.50.880:FF:000002">
    <property type="entry name" value="CTP synthase"/>
    <property type="match status" value="1"/>
</dbReference>
<dbReference type="Gene3D" id="3.40.50.880">
    <property type="match status" value="1"/>
</dbReference>
<dbReference type="Gene3D" id="3.40.50.300">
    <property type="entry name" value="P-loop containing nucleotide triphosphate hydrolases"/>
    <property type="match status" value="1"/>
</dbReference>
<dbReference type="HAMAP" id="MF_01227">
    <property type="entry name" value="PyrG"/>
    <property type="match status" value="1"/>
</dbReference>
<dbReference type="InterPro" id="IPR029062">
    <property type="entry name" value="Class_I_gatase-like"/>
</dbReference>
<dbReference type="InterPro" id="IPR004468">
    <property type="entry name" value="CTP_synthase"/>
</dbReference>
<dbReference type="InterPro" id="IPR017456">
    <property type="entry name" value="CTP_synthase_N"/>
</dbReference>
<dbReference type="InterPro" id="IPR017926">
    <property type="entry name" value="GATASE"/>
</dbReference>
<dbReference type="InterPro" id="IPR033828">
    <property type="entry name" value="GATase1_CTP_Synthase"/>
</dbReference>
<dbReference type="InterPro" id="IPR027417">
    <property type="entry name" value="P-loop_NTPase"/>
</dbReference>
<dbReference type="NCBIfam" id="NF003792">
    <property type="entry name" value="PRK05380.1"/>
    <property type="match status" value="1"/>
</dbReference>
<dbReference type="NCBIfam" id="TIGR00337">
    <property type="entry name" value="PyrG"/>
    <property type="match status" value="1"/>
</dbReference>
<dbReference type="PANTHER" id="PTHR11550">
    <property type="entry name" value="CTP SYNTHASE"/>
    <property type="match status" value="1"/>
</dbReference>
<dbReference type="PANTHER" id="PTHR11550:SF0">
    <property type="entry name" value="CTP SYNTHASE-RELATED"/>
    <property type="match status" value="1"/>
</dbReference>
<dbReference type="Pfam" id="PF06418">
    <property type="entry name" value="CTP_synth_N"/>
    <property type="match status" value="1"/>
</dbReference>
<dbReference type="Pfam" id="PF00117">
    <property type="entry name" value="GATase"/>
    <property type="match status" value="1"/>
</dbReference>
<dbReference type="SUPFAM" id="SSF52317">
    <property type="entry name" value="Class I glutamine amidotransferase-like"/>
    <property type="match status" value="1"/>
</dbReference>
<dbReference type="SUPFAM" id="SSF52540">
    <property type="entry name" value="P-loop containing nucleoside triphosphate hydrolases"/>
    <property type="match status" value="1"/>
</dbReference>
<dbReference type="PROSITE" id="PS51273">
    <property type="entry name" value="GATASE_TYPE_1"/>
    <property type="match status" value="1"/>
</dbReference>
<reference key="1">
    <citation type="journal article" date="2009" name="PLoS Genet.">
        <title>Organised genome dynamics in the Escherichia coli species results in highly diverse adaptive paths.</title>
        <authorList>
            <person name="Touchon M."/>
            <person name="Hoede C."/>
            <person name="Tenaillon O."/>
            <person name="Barbe V."/>
            <person name="Baeriswyl S."/>
            <person name="Bidet P."/>
            <person name="Bingen E."/>
            <person name="Bonacorsi S."/>
            <person name="Bouchier C."/>
            <person name="Bouvet O."/>
            <person name="Calteau A."/>
            <person name="Chiapello H."/>
            <person name="Clermont O."/>
            <person name="Cruveiller S."/>
            <person name="Danchin A."/>
            <person name="Diard M."/>
            <person name="Dossat C."/>
            <person name="Karoui M.E."/>
            <person name="Frapy E."/>
            <person name="Garry L."/>
            <person name="Ghigo J.M."/>
            <person name="Gilles A.M."/>
            <person name="Johnson J."/>
            <person name="Le Bouguenec C."/>
            <person name="Lescat M."/>
            <person name="Mangenot S."/>
            <person name="Martinez-Jehanne V."/>
            <person name="Matic I."/>
            <person name="Nassif X."/>
            <person name="Oztas S."/>
            <person name="Petit M.A."/>
            <person name="Pichon C."/>
            <person name="Rouy Z."/>
            <person name="Ruf C.S."/>
            <person name="Schneider D."/>
            <person name="Tourret J."/>
            <person name="Vacherie B."/>
            <person name="Vallenet D."/>
            <person name="Medigue C."/>
            <person name="Rocha E.P.C."/>
            <person name="Denamur E."/>
        </authorList>
    </citation>
    <scope>NUCLEOTIDE SEQUENCE [LARGE SCALE GENOMIC DNA]</scope>
    <source>
        <strain>ATCC 35469 / DSM 13698 / BCRC 15582 / CCUG 18766 / IAM 14443 / JCM 21226 / LMG 7866 / NBRC 102419 / NCTC 12128 / CDC 0568-73</strain>
    </source>
</reference>
<sequence length="545" mass="60374">MTTNYIFVTGGVVSSLGKGIAAASLAAILEARGLNVTIMKLDPYINVDPGTMSPIQHGEVFVTEDGAETDLDLGHYERFIRTKMSRRNNFTTGRIYSDVLRKERRGDYLGATVQVIPHITNAIKERVLEGGEGHDVVLVEIGGTVGDIESLPFLEAIRQMAVEIGREHTLFMHLTLVPYMAASGEVKTKPTQHSVKELLSIGIQPDILICRSDRAVPANERAKIALFCNVPEKAVISLKDVDSIYKIPGLLKSQGLDDYICKRFSLNCPEANLSEWEQVIFEEANPVSEVTIGMVGKYIELPDAYKSVIEALKHGGLKNRVSVNIKLIDSQDVETRGVEILKGLDAILVPGGFGYRGVEGMITTARFARENNIPYLGICLGMQVALIDYARHVANMENANSTEFVPDCKYPVVALITEWRDENGNVEVRSEKSDLGGTMRLGAQQCQLVDDSLVRQLYNAPTIVERHRHRYEVNNMLLKQIEDAGLRVAGRSGDDQLVEIIEVPNHPWFVACQFHPEFTSTPRDGHPLFAGFVKAASEFQKRQAK</sequence>
<gene>
    <name evidence="1" type="primary">pyrG</name>
    <name type="ordered locus">EFER_0284</name>
</gene>
<name>PYRG_ESCF3</name>
<feature type="chain" id="PRO_1000139455" description="CTP synthase">
    <location>
        <begin position="1"/>
        <end position="545"/>
    </location>
</feature>
<feature type="domain" description="Glutamine amidotransferase type-1" evidence="1">
    <location>
        <begin position="291"/>
        <end position="542"/>
    </location>
</feature>
<feature type="region of interest" description="Amidoligase domain" evidence="1">
    <location>
        <begin position="1"/>
        <end position="266"/>
    </location>
</feature>
<feature type="active site" description="Nucleophile; for glutamine hydrolysis" evidence="1">
    <location>
        <position position="379"/>
    </location>
</feature>
<feature type="active site" evidence="1">
    <location>
        <position position="515"/>
    </location>
</feature>
<feature type="active site" evidence="1">
    <location>
        <position position="517"/>
    </location>
</feature>
<feature type="binding site" evidence="1">
    <location>
        <position position="14"/>
    </location>
    <ligand>
        <name>CTP</name>
        <dbReference type="ChEBI" id="CHEBI:37563"/>
        <note>allosteric inhibitor</note>
    </ligand>
</feature>
<feature type="binding site" evidence="1">
    <location>
        <position position="14"/>
    </location>
    <ligand>
        <name>UTP</name>
        <dbReference type="ChEBI" id="CHEBI:46398"/>
    </ligand>
</feature>
<feature type="binding site" evidence="1">
    <location>
        <begin position="15"/>
        <end position="20"/>
    </location>
    <ligand>
        <name>ATP</name>
        <dbReference type="ChEBI" id="CHEBI:30616"/>
    </ligand>
</feature>
<feature type="binding site" evidence="1">
    <location>
        <position position="72"/>
    </location>
    <ligand>
        <name>ATP</name>
        <dbReference type="ChEBI" id="CHEBI:30616"/>
    </ligand>
</feature>
<feature type="binding site" evidence="1">
    <location>
        <position position="72"/>
    </location>
    <ligand>
        <name>Mg(2+)</name>
        <dbReference type="ChEBI" id="CHEBI:18420"/>
    </ligand>
</feature>
<feature type="binding site" evidence="1">
    <location>
        <position position="140"/>
    </location>
    <ligand>
        <name>Mg(2+)</name>
        <dbReference type="ChEBI" id="CHEBI:18420"/>
    </ligand>
</feature>
<feature type="binding site" evidence="1">
    <location>
        <begin position="147"/>
        <end position="149"/>
    </location>
    <ligand>
        <name>CTP</name>
        <dbReference type="ChEBI" id="CHEBI:37563"/>
        <note>allosteric inhibitor</note>
    </ligand>
</feature>
<feature type="binding site" evidence="1">
    <location>
        <begin position="187"/>
        <end position="192"/>
    </location>
    <ligand>
        <name>CTP</name>
        <dbReference type="ChEBI" id="CHEBI:37563"/>
        <note>allosteric inhibitor</note>
    </ligand>
</feature>
<feature type="binding site" evidence="1">
    <location>
        <begin position="187"/>
        <end position="192"/>
    </location>
    <ligand>
        <name>UTP</name>
        <dbReference type="ChEBI" id="CHEBI:46398"/>
    </ligand>
</feature>
<feature type="binding site" evidence="1">
    <location>
        <position position="223"/>
    </location>
    <ligand>
        <name>CTP</name>
        <dbReference type="ChEBI" id="CHEBI:37563"/>
        <note>allosteric inhibitor</note>
    </ligand>
</feature>
<feature type="binding site" evidence="1">
    <location>
        <position position="223"/>
    </location>
    <ligand>
        <name>UTP</name>
        <dbReference type="ChEBI" id="CHEBI:46398"/>
    </ligand>
</feature>
<feature type="binding site" evidence="1">
    <location>
        <begin position="239"/>
        <end position="241"/>
    </location>
    <ligand>
        <name>ATP</name>
        <dbReference type="ChEBI" id="CHEBI:30616"/>
    </ligand>
</feature>
<feature type="binding site" evidence="1">
    <location>
        <position position="352"/>
    </location>
    <ligand>
        <name>L-glutamine</name>
        <dbReference type="ChEBI" id="CHEBI:58359"/>
    </ligand>
</feature>
<feature type="binding site" evidence="1">
    <location>
        <begin position="380"/>
        <end position="383"/>
    </location>
    <ligand>
        <name>L-glutamine</name>
        <dbReference type="ChEBI" id="CHEBI:58359"/>
    </ligand>
</feature>
<feature type="binding site" evidence="1">
    <location>
        <position position="403"/>
    </location>
    <ligand>
        <name>L-glutamine</name>
        <dbReference type="ChEBI" id="CHEBI:58359"/>
    </ligand>
</feature>
<feature type="binding site" evidence="1">
    <location>
        <position position="470"/>
    </location>
    <ligand>
        <name>L-glutamine</name>
        <dbReference type="ChEBI" id="CHEBI:58359"/>
    </ligand>
</feature>
<comment type="function">
    <text evidence="1">Catalyzes the ATP-dependent amination of UTP to CTP with either L-glutamine or ammonia as the source of nitrogen. Regulates intracellular CTP levels through interactions with the four ribonucleotide triphosphates.</text>
</comment>
<comment type="catalytic activity">
    <reaction evidence="1">
        <text>UTP + L-glutamine + ATP + H2O = CTP + L-glutamate + ADP + phosphate + 2 H(+)</text>
        <dbReference type="Rhea" id="RHEA:26426"/>
        <dbReference type="ChEBI" id="CHEBI:15377"/>
        <dbReference type="ChEBI" id="CHEBI:15378"/>
        <dbReference type="ChEBI" id="CHEBI:29985"/>
        <dbReference type="ChEBI" id="CHEBI:30616"/>
        <dbReference type="ChEBI" id="CHEBI:37563"/>
        <dbReference type="ChEBI" id="CHEBI:43474"/>
        <dbReference type="ChEBI" id="CHEBI:46398"/>
        <dbReference type="ChEBI" id="CHEBI:58359"/>
        <dbReference type="ChEBI" id="CHEBI:456216"/>
        <dbReference type="EC" id="6.3.4.2"/>
    </reaction>
</comment>
<comment type="catalytic activity">
    <reaction evidence="1">
        <text>L-glutamine + H2O = L-glutamate + NH4(+)</text>
        <dbReference type="Rhea" id="RHEA:15889"/>
        <dbReference type="ChEBI" id="CHEBI:15377"/>
        <dbReference type="ChEBI" id="CHEBI:28938"/>
        <dbReference type="ChEBI" id="CHEBI:29985"/>
        <dbReference type="ChEBI" id="CHEBI:58359"/>
    </reaction>
</comment>
<comment type="catalytic activity">
    <reaction evidence="1">
        <text>UTP + NH4(+) + ATP = CTP + ADP + phosphate + 2 H(+)</text>
        <dbReference type="Rhea" id="RHEA:16597"/>
        <dbReference type="ChEBI" id="CHEBI:15378"/>
        <dbReference type="ChEBI" id="CHEBI:28938"/>
        <dbReference type="ChEBI" id="CHEBI:30616"/>
        <dbReference type="ChEBI" id="CHEBI:37563"/>
        <dbReference type="ChEBI" id="CHEBI:43474"/>
        <dbReference type="ChEBI" id="CHEBI:46398"/>
        <dbReference type="ChEBI" id="CHEBI:456216"/>
    </reaction>
</comment>
<comment type="activity regulation">
    <text evidence="1">Allosterically activated by GTP, when glutamine is the substrate; GTP has no effect on the reaction when ammonia is the substrate. The allosteric effector GTP functions by stabilizing the protein conformation that binds the tetrahedral intermediate(s) formed during glutamine hydrolysis. Inhibited by the product CTP, via allosteric rather than competitive inhibition.</text>
</comment>
<comment type="pathway">
    <text evidence="1">Pyrimidine metabolism; CTP biosynthesis via de novo pathway; CTP from UDP: step 2/2.</text>
</comment>
<comment type="subunit">
    <text evidence="1">Homotetramer.</text>
</comment>
<comment type="miscellaneous">
    <text evidence="1">CTPSs have evolved a hybrid strategy for distinguishing between UTP and CTP. The overlapping regions of the product feedback inhibitory and substrate sites recognize a common feature in both compounds, the triphosphate moiety. To differentiate isosteric substrate and product pyrimidine rings, an additional pocket far from the expected kinase/ligase catalytic site, specifically recognizes the cytosine and ribose portions of the product inhibitor.</text>
</comment>
<comment type="similarity">
    <text evidence="1">Belongs to the CTP synthase family.</text>
</comment>
<accession>B7LWP4</accession>
<keyword id="KW-0067">ATP-binding</keyword>
<keyword id="KW-0315">Glutamine amidotransferase</keyword>
<keyword id="KW-0436">Ligase</keyword>
<keyword id="KW-0460">Magnesium</keyword>
<keyword id="KW-0479">Metal-binding</keyword>
<keyword id="KW-0547">Nucleotide-binding</keyword>
<keyword id="KW-0665">Pyrimidine biosynthesis</keyword>
<evidence type="ECO:0000255" key="1">
    <source>
        <dbReference type="HAMAP-Rule" id="MF_01227"/>
    </source>
</evidence>
<protein>
    <recommendedName>
        <fullName evidence="1">CTP synthase</fullName>
        <ecNumber evidence="1">6.3.4.2</ecNumber>
    </recommendedName>
    <alternativeName>
        <fullName evidence="1">Cytidine 5'-triphosphate synthase</fullName>
    </alternativeName>
    <alternativeName>
        <fullName evidence="1">Cytidine triphosphate synthetase</fullName>
        <shortName evidence="1">CTP synthetase</shortName>
        <shortName evidence="1">CTPS</shortName>
    </alternativeName>
    <alternativeName>
        <fullName evidence="1">UTP--ammonia ligase</fullName>
    </alternativeName>
</protein>
<organism>
    <name type="scientific">Escherichia fergusonii (strain ATCC 35469 / DSM 13698 / CCUG 18766 / IAM 14443 / JCM 21226 / LMG 7866 / NBRC 102419 / NCTC 12128 / CDC 0568-73)</name>
    <dbReference type="NCBI Taxonomy" id="585054"/>
    <lineage>
        <taxon>Bacteria</taxon>
        <taxon>Pseudomonadati</taxon>
        <taxon>Pseudomonadota</taxon>
        <taxon>Gammaproteobacteria</taxon>
        <taxon>Enterobacterales</taxon>
        <taxon>Enterobacteriaceae</taxon>
        <taxon>Escherichia</taxon>
    </lineage>
</organism>
<proteinExistence type="inferred from homology"/>